<proteinExistence type="evidence at transcript level"/>
<organism>
    <name type="scientific">Catostomus commersonii</name>
    <name type="common">White sucker</name>
    <name type="synonym">Cyprinus commersonnii</name>
    <dbReference type="NCBI Taxonomy" id="7971"/>
    <lineage>
        <taxon>Eukaryota</taxon>
        <taxon>Metazoa</taxon>
        <taxon>Chordata</taxon>
        <taxon>Craniata</taxon>
        <taxon>Vertebrata</taxon>
        <taxon>Euteleostomi</taxon>
        <taxon>Actinopterygii</taxon>
        <taxon>Neopterygii</taxon>
        <taxon>Teleostei</taxon>
        <taxon>Ostariophysi</taxon>
        <taxon>Cypriniformes</taxon>
        <taxon>Catostomoidei</taxon>
        <taxon>Catostomidae</taxon>
        <taxon>Catostomus</taxon>
    </lineage>
</organism>
<reference key="1">
    <citation type="journal article" date="1989" name="EMBO J.">
        <title>Two isotocin genes are present in the white sucker Catostomus commersoni both lacking introns in their protein coding regions.</title>
        <authorList>
            <person name="Figueroa J."/>
            <person name="Morley S.D."/>
            <person name="Heierhorst J."/>
            <person name="Krentler C."/>
            <person name="Lederis K."/>
            <person name="Richter D."/>
        </authorList>
    </citation>
    <scope>NUCLEOTIDE SEQUENCE [MRNA]</scope>
</reference>
<accession>P15211</accession>
<sequence>MSGSMSSVFSLLYLLSVCSACYISNCPIGGKRAVQDLPSRQCMSCGPGDRGRCFGPSICCGEGLGCLLGSPETLRCQEEDFLPSPCEAGGKMCGYEGRCAAPGVCCDSEGCSMDQSCVNGDATAFGQPDLLLKLLHLSNHAHPYRLHQ</sequence>
<dbReference type="EMBL" id="X16622">
    <property type="protein sequence ID" value="CAA34619.1"/>
    <property type="molecule type" value="mRNA"/>
</dbReference>
<dbReference type="PIR" id="S06019">
    <property type="entry name" value="S06019"/>
</dbReference>
<dbReference type="SMR" id="P15211"/>
<dbReference type="GO" id="GO:0005615">
    <property type="term" value="C:extracellular space"/>
    <property type="evidence" value="ECO:0007669"/>
    <property type="project" value="TreeGrafter"/>
</dbReference>
<dbReference type="GO" id="GO:0030141">
    <property type="term" value="C:secretory granule"/>
    <property type="evidence" value="ECO:0007669"/>
    <property type="project" value="TreeGrafter"/>
</dbReference>
<dbReference type="GO" id="GO:0005185">
    <property type="term" value="F:neurohypophyseal hormone activity"/>
    <property type="evidence" value="ECO:0007669"/>
    <property type="project" value="InterPro"/>
</dbReference>
<dbReference type="FunFam" id="2.60.9.10:FF:000001">
    <property type="entry name" value="oxytocin-neurophysin 1"/>
    <property type="match status" value="1"/>
</dbReference>
<dbReference type="Gene3D" id="2.60.9.10">
    <property type="entry name" value="Neurohypophysial hormone domain"/>
    <property type="match status" value="1"/>
</dbReference>
<dbReference type="InterPro" id="IPR000981">
    <property type="entry name" value="Neurhyp_horm"/>
</dbReference>
<dbReference type="InterPro" id="IPR036387">
    <property type="entry name" value="Neurhyp_horm_dom_sf"/>
</dbReference>
<dbReference type="InterPro" id="IPR022423">
    <property type="entry name" value="Neurohypophysial_hormone_CS"/>
</dbReference>
<dbReference type="PANTHER" id="PTHR11681:SF5">
    <property type="entry name" value="ISOTOCIN"/>
    <property type="match status" value="1"/>
</dbReference>
<dbReference type="PANTHER" id="PTHR11681">
    <property type="entry name" value="NEUROPHYSIN"/>
    <property type="match status" value="1"/>
</dbReference>
<dbReference type="Pfam" id="PF00184">
    <property type="entry name" value="Hormone_5"/>
    <property type="match status" value="1"/>
</dbReference>
<dbReference type="PIRSF" id="PIRSF001815">
    <property type="entry name" value="Nonapeptide_hormone_precursor"/>
    <property type="match status" value="1"/>
</dbReference>
<dbReference type="PRINTS" id="PR00831">
    <property type="entry name" value="NEUROPHYSIN"/>
</dbReference>
<dbReference type="SMART" id="SM00003">
    <property type="entry name" value="NH"/>
    <property type="match status" value="1"/>
</dbReference>
<dbReference type="SUPFAM" id="SSF49606">
    <property type="entry name" value="Neurophysin II"/>
    <property type="match status" value="1"/>
</dbReference>
<dbReference type="PROSITE" id="PS00264">
    <property type="entry name" value="NEUROHYPOPHYS_HORM"/>
    <property type="match status" value="1"/>
</dbReference>
<protein>
    <recommendedName>
        <fullName>Isotocin-neurophysin IT 2</fullName>
    </recommendedName>
    <component>
        <recommendedName>
            <fullName>Isotocin</fullName>
            <shortName>IT</shortName>
        </recommendedName>
    </component>
    <component>
        <recommendedName>
            <fullName>Neurophysin IT 2</fullName>
        </recommendedName>
    </component>
</protein>
<name>NEU2_CATCO</name>
<comment type="function">
    <text>Isotocin causes contraction of smooth muscles.</text>
</comment>
<comment type="similarity">
    <text evidence="3">Belongs to the vasopressin/oxytocin family.</text>
</comment>
<evidence type="ECO:0000250" key="1"/>
<evidence type="ECO:0000250" key="2">
    <source>
        <dbReference type="UniProtKB" id="P01175"/>
    </source>
</evidence>
<evidence type="ECO:0000305" key="3"/>
<keyword id="KW-0027">Amidation</keyword>
<keyword id="KW-0165">Cleavage on pair of basic residues</keyword>
<keyword id="KW-1015">Disulfide bond</keyword>
<keyword id="KW-0372">Hormone</keyword>
<keyword id="KW-0732">Signal</keyword>
<feature type="signal peptide">
    <location>
        <begin position="1"/>
        <end position="20"/>
    </location>
</feature>
<feature type="peptide" id="PRO_0000020546" description="Isotocin">
    <location>
        <begin position="21"/>
        <end position="29"/>
    </location>
</feature>
<feature type="chain" id="PRO_0000020547" description="Neurophysin IT 2">
    <location>
        <begin position="32"/>
        <end position="148"/>
    </location>
</feature>
<feature type="modified residue" description="Glycine amide" evidence="1">
    <location>
        <position position="29"/>
    </location>
</feature>
<feature type="disulfide bond" evidence="2">
    <location>
        <begin position="21"/>
        <end position="26"/>
    </location>
</feature>
<feature type="disulfide bond" evidence="2">
    <location>
        <begin position="42"/>
        <end position="86"/>
    </location>
</feature>
<feature type="disulfide bond" evidence="2">
    <location>
        <begin position="45"/>
        <end position="59"/>
    </location>
</feature>
<feature type="disulfide bond" evidence="2">
    <location>
        <begin position="53"/>
        <end position="76"/>
    </location>
</feature>
<feature type="disulfide bond" evidence="2">
    <location>
        <begin position="60"/>
        <end position="66"/>
    </location>
</feature>
<feature type="disulfide bond" evidence="2">
    <location>
        <begin position="93"/>
        <end position="105"/>
    </location>
</feature>
<feature type="disulfide bond" evidence="2">
    <location>
        <begin position="99"/>
        <end position="117"/>
    </location>
</feature>
<feature type="disulfide bond" evidence="2">
    <location>
        <begin position="106"/>
        <end position="111"/>
    </location>
</feature>